<comment type="function">
    <text evidence="1">Catalyzes the transfer of a N-acetyl-glucosamine moiety to 1D-myo-inositol 3-phosphate to produce 1D-myo-inositol 2-acetamido-2-deoxy-glucopyranoside 3-phosphate in the mycothiol biosynthesis pathway.</text>
</comment>
<comment type="catalytic activity">
    <reaction evidence="1">
        <text>1D-myo-inositol 3-phosphate + UDP-N-acetyl-alpha-D-glucosamine = 1D-myo-inositol 2-acetamido-2-deoxy-alpha-D-glucopyranoside 3-phosphate + UDP + H(+)</text>
        <dbReference type="Rhea" id="RHEA:26188"/>
        <dbReference type="ChEBI" id="CHEBI:15378"/>
        <dbReference type="ChEBI" id="CHEBI:57705"/>
        <dbReference type="ChEBI" id="CHEBI:58223"/>
        <dbReference type="ChEBI" id="CHEBI:58401"/>
        <dbReference type="ChEBI" id="CHEBI:58892"/>
        <dbReference type="EC" id="2.4.1.250"/>
    </reaction>
</comment>
<comment type="subunit">
    <text evidence="1">Homodimer.</text>
</comment>
<comment type="similarity">
    <text evidence="1">Belongs to the glycosyltransferase group 1 family. MshA subfamily.</text>
</comment>
<proteinExistence type="inferred from homology"/>
<reference key="1">
    <citation type="submission" date="2006-12" db="EMBL/GenBank/DDBJ databases">
        <title>Complete sequence of Mycobacterium vanbaalenii PYR-1.</title>
        <authorList>
            <consortium name="US DOE Joint Genome Institute"/>
            <person name="Copeland A."/>
            <person name="Lucas S."/>
            <person name="Lapidus A."/>
            <person name="Barry K."/>
            <person name="Detter J.C."/>
            <person name="Glavina del Rio T."/>
            <person name="Hammon N."/>
            <person name="Israni S."/>
            <person name="Dalin E."/>
            <person name="Tice H."/>
            <person name="Pitluck S."/>
            <person name="Singan V."/>
            <person name="Schmutz J."/>
            <person name="Larimer F."/>
            <person name="Land M."/>
            <person name="Hauser L."/>
            <person name="Kyrpides N."/>
            <person name="Anderson I.J."/>
            <person name="Miller C."/>
            <person name="Richardson P."/>
        </authorList>
    </citation>
    <scope>NUCLEOTIDE SEQUENCE [LARGE SCALE GENOMIC DNA]</scope>
    <source>
        <strain>DSM 7251 / JCM 13017 / BCRC 16820 / KCTC 9966 / NRRL B-24157 / PYR-1</strain>
    </source>
</reference>
<organism>
    <name type="scientific">Mycolicibacterium vanbaalenii (strain DSM 7251 / JCM 13017 / BCRC 16820 / KCTC 9966 / NRRL B-24157 / PYR-1)</name>
    <name type="common">Mycobacterium vanbaalenii</name>
    <dbReference type="NCBI Taxonomy" id="350058"/>
    <lineage>
        <taxon>Bacteria</taxon>
        <taxon>Bacillati</taxon>
        <taxon>Actinomycetota</taxon>
        <taxon>Actinomycetes</taxon>
        <taxon>Mycobacteriales</taxon>
        <taxon>Mycobacteriaceae</taxon>
        <taxon>Mycolicibacterium</taxon>
    </lineage>
</organism>
<feature type="chain" id="PRO_0000400145" description="D-inositol 3-phosphate glycosyltransferase">
    <location>
        <begin position="1"/>
        <end position="450"/>
    </location>
</feature>
<feature type="binding site" evidence="1">
    <location>
        <position position="26"/>
    </location>
    <ligand>
        <name>1D-myo-inositol 3-phosphate</name>
        <dbReference type="ChEBI" id="CHEBI:58401"/>
    </ligand>
</feature>
<feature type="binding site" evidence="1">
    <location>
        <begin position="32"/>
        <end position="33"/>
    </location>
    <ligand>
        <name>UDP-N-acetyl-alpha-D-glucosamine</name>
        <dbReference type="ChEBI" id="CHEBI:57705"/>
    </ligand>
</feature>
<feature type="binding site" evidence="1">
    <location>
        <begin position="37"/>
        <end position="42"/>
    </location>
    <ligand>
        <name>1D-myo-inositol 3-phosphate</name>
        <dbReference type="ChEBI" id="CHEBI:58401"/>
    </ligand>
</feature>
<feature type="binding site" evidence="1">
    <location>
        <position position="40"/>
    </location>
    <ligand>
        <name>UDP-N-acetyl-alpha-D-glucosamine</name>
        <dbReference type="ChEBI" id="CHEBI:57705"/>
    </ligand>
</feature>
<feature type="binding site" evidence="1">
    <location>
        <position position="95"/>
    </location>
    <ligand>
        <name>1D-myo-inositol 3-phosphate</name>
        <dbReference type="ChEBI" id="CHEBI:58401"/>
    </ligand>
</feature>
<feature type="binding site" evidence="1">
    <location>
        <position position="128"/>
    </location>
    <ligand>
        <name>1D-myo-inositol 3-phosphate</name>
        <dbReference type="ChEBI" id="CHEBI:58401"/>
    </ligand>
</feature>
<feature type="binding site" evidence="1">
    <location>
        <position position="152"/>
    </location>
    <ligand>
        <name>1D-myo-inositol 3-phosphate</name>
        <dbReference type="ChEBI" id="CHEBI:58401"/>
    </ligand>
</feature>
<feature type="binding site" evidence="1">
    <location>
        <position position="172"/>
    </location>
    <ligand>
        <name>1D-myo-inositol 3-phosphate</name>
        <dbReference type="ChEBI" id="CHEBI:58401"/>
    </ligand>
</feature>
<feature type="binding site" evidence="1">
    <location>
        <position position="246"/>
    </location>
    <ligand>
        <name>UDP-N-acetyl-alpha-D-glucosamine</name>
        <dbReference type="ChEBI" id="CHEBI:57705"/>
    </ligand>
</feature>
<feature type="binding site" evidence="1">
    <location>
        <position position="251"/>
    </location>
    <ligand>
        <name>UDP-N-acetyl-alpha-D-glucosamine</name>
        <dbReference type="ChEBI" id="CHEBI:57705"/>
    </ligand>
</feature>
<feature type="binding site" evidence="1">
    <location>
        <position position="313"/>
    </location>
    <ligand>
        <name>UDP-N-acetyl-alpha-D-glucosamine</name>
        <dbReference type="ChEBI" id="CHEBI:57705"/>
    </ligand>
</feature>
<feature type="binding site" evidence="1">
    <location>
        <position position="322"/>
    </location>
    <ligand>
        <name>Mg(2+)</name>
        <dbReference type="ChEBI" id="CHEBI:18420"/>
    </ligand>
</feature>
<feature type="binding site" evidence="1">
    <location>
        <position position="323"/>
    </location>
    <ligand>
        <name>Mg(2+)</name>
        <dbReference type="ChEBI" id="CHEBI:18420"/>
    </ligand>
</feature>
<feature type="binding site" evidence="1">
    <location>
        <position position="325"/>
    </location>
    <ligand>
        <name>Mg(2+)</name>
        <dbReference type="ChEBI" id="CHEBI:18420"/>
    </ligand>
</feature>
<feature type="binding site" evidence="1">
    <location>
        <position position="335"/>
    </location>
    <ligand>
        <name>UDP-N-acetyl-alpha-D-glucosamine</name>
        <dbReference type="ChEBI" id="CHEBI:57705"/>
    </ligand>
</feature>
<feature type="binding site" evidence="1">
    <location>
        <position position="343"/>
    </location>
    <ligand>
        <name>UDP-N-acetyl-alpha-D-glucosamine</name>
        <dbReference type="ChEBI" id="CHEBI:57705"/>
    </ligand>
</feature>
<feature type="binding site" evidence="1">
    <location>
        <position position="349"/>
    </location>
    <ligand>
        <name>Mg(2+)</name>
        <dbReference type="ChEBI" id="CHEBI:18420"/>
    </ligand>
</feature>
<dbReference type="EC" id="2.4.1.250" evidence="1"/>
<dbReference type="EMBL" id="CP000511">
    <property type="protein sequence ID" value="ABM11665.1"/>
    <property type="molecule type" value="Genomic_DNA"/>
</dbReference>
<dbReference type="RefSeq" id="WP_011778101.1">
    <property type="nucleotide sequence ID" value="NZ_JACKSD010000022.1"/>
</dbReference>
<dbReference type="SMR" id="A1T3B5"/>
<dbReference type="STRING" id="350058.Mvan_0827"/>
<dbReference type="CAZy" id="GT4">
    <property type="family name" value="Glycosyltransferase Family 4"/>
</dbReference>
<dbReference type="KEGG" id="mva:Mvan_0827"/>
<dbReference type="eggNOG" id="COG0438">
    <property type="taxonomic scope" value="Bacteria"/>
</dbReference>
<dbReference type="HOGENOM" id="CLU_009583_2_3_11"/>
<dbReference type="Proteomes" id="UP000009159">
    <property type="component" value="Chromosome"/>
</dbReference>
<dbReference type="GO" id="GO:0008375">
    <property type="term" value="F:acetylglucosaminyltransferase activity"/>
    <property type="evidence" value="ECO:0007669"/>
    <property type="project" value="UniProtKB-UniRule"/>
</dbReference>
<dbReference type="GO" id="GO:0102710">
    <property type="term" value="F:D-inositol-3-phosphate glycosyltransferase activity"/>
    <property type="evidence" value="ECO:0007669"/>
    <property type="project" value="UniProtKB-EC"/>
</dbReference>
<dbReference type="GO" id="GO:0000287">
    <property type="term" value="F:magnesium ion binding"/>
    <property type="evidence" value="ECO:0007669"/>
    <property type="project" value="UniProtKB-UniRule"/>
</dbReference>
<dbReference type="GO" id="GO:0010125">
    <property type="term" value="P:mycothiol biosynthetic process"/>
    <property type="evidence" value="ECO:0007669"/>
    <property type="project" value="UniProtKB-UniRule"/>
</dbReference>
<dbReference type="CDD" id="cd03800">
    <property type="entry name" value="GT4_sucrose_synthase"/>
    <property type="match status" value="1"/>
</dbReference>
<dbReference type="Gene3D" id="3.40.50.2000">
    <property type="entry name" value="Glycogen Phosphorylase B"/>
    <property type="match status" value="2"/>
</dbReference>
<dbReference type="HAMAP" id="MF_01695">
    <property type="entry name" value="MshA"/>
    <property type="match status" value="1"/>
</dbReference>
<dbReference type="InterPro" id="IPR001296">
    <property type="entry name" value="Glyco_trans_1"/>
</dbReference>
<dbReference type="InterPro" id="IPR028098">
    <property type="entry name" value="Glyco_trans_4-like_N"/>
</dbReference>
<dbReference type="InterPro" id="IPR017814">
    <property type="entry name" value="Mycothiol_biosynthesis_MshA"/>
</dbReference>
<dbReference type="NCBIfam" id="TIGR03449">
    <property type="entry name" value="mycothiol_MshA"/>
    <property type="match status" value="1"/>
</dbReference>
<dbReference type="PANTHER" id="PTHR12526:SF510">
    <property type="entry name" value="D-INOSITOL 3-PHOSPHATE GLYCOSYLTRANSFERASE"/>
    <property type="match status" value="1"/>
</dbReference>
<dbReference type="PANTHER" id="PTHR12526">
    <property type="entry name" value="GLYCOSYLTRANSFERASE"/>
    <property type="match status" value="1"/>
</dbReference>
<dbReference type="Pfam" id="PF13579">
    <property type="entry name" value="Glyco_trans_4_4"/>
    <property type="match status" value="1"/>
</dbReference>
<dbReference type="Pfam" id="PF00534">
    <property type="entry name" value="Glycos_transf_1"/>
    <property type="match status" value="1"/>
</dbReference>
<dbReference type="SUPFAM" id="SSF53756">
    <property type="entry name" value="UDP-Glycosyltransferase/glycogen phosphorylase"/>
    <property type="match status" value="1"/>
</dbReference>
<gene>
    <name evidence="1" type="primary">mshA</name>
    <name type="ordered locus">Mvan_0827</name>
</gene>
<name>MSHA_MYCVP</name>
<sequence>MRLATEPASLPSGLPEPRRVAVLSVHTSPLAQPGTGDAGGMNVYVLQTALELANRGVDVEIFTRATSSADQPVVPVAPGVLVRNVVAGPFEGLDKNDLPTQLCAFTAGVLRAEATHEPGYYDIVHSHYWLSGQVGWLAADRWAVPLVHTAHTLAAVKNASLAAGDAPEPPMRSIGEQQVVDAADRLIVNTEHEAQQLVSLHQADPARIDVVHPGVDLATFTPGDRLAARAALGLDANSRIVAFVGRIQPLKAPDVLLRAAALLPDVQVLIAGGPSGSGLISRPGAGGLATPDNLVNLAAELGMTDRVTFLPPQSRDNLVQVYRAADVVAVPSYSESFGLVAVEAQACGTPVVAAAVGGLPVAVRDGVSGALVDGHDPGDWAGTLADVLAADPATLSRAAVDHAATFSWSHTVDALLAGYGRAIADHRARHQGQLARRSGRRFSMRRGVRA</sequence>
<accession>A1T3B5</accession>
<protein>
    <recommendedName>
        <fullName>D-inositol 3-phosphate glycosyltransferase</fullName>
        <ecNumber evidence="1">2.4.1.250</ecNumber>
    </recommendedName>
    <alternativeName>
        <fullName evidence="1">N-acetylglucosamine-inositol-phosphate N-acetylglucosaminyltransferase</fullName>
        <shortName evidence="1">GlcNAc-Ins-P N-acetylglucosaminyltransferase</shortName>
    </alternativeName>
</protein>
<keyword id="KW-0328">Glycosyltransferase</keyword>
<keyword id="KW-0460">Magnesium</keyword>
<keyword id="KW-0479">Metal-binding</keyword>
<keyword id="KW-0808">Transferase</keyword>
<evidence type="ECO:0000255" key="1">
    <source>
        <dbReference type="HAMAP-Rule" id="MF_01695"/>
    </source>
</evidence>